<organism>
    <name type="scientific">Pseudo-nitzschia multiseries</name>
    <name type="common">Marine planktonic diatom</name>
    <name type="synonym">Nitzschia pungens f. multiseries</name>
    <dbReference type="NCBI Taxonomy" id="37319"/>
    <lineage>
        <taxon>Eukaryota</taxon>
        <taxon>Sar</taxon>
        <taxon>Stramenopiles</taxon>
        <taxon>Ochrophyta</taxon>
        <taxon>Bacillariophyta</taxon>
        <taxon>Bacillariophyceae</taxon>
        <taxon>Bacillariophycidae</taxon>
        <taxon>Bacillariales</taxon>
        <taxon>Bacillariaceae</taxon>
        <taxon>Pseudo-nitzschia</taxon>
    </lineage>
</organism>
<evidence type="ECO:0000269" key="1">
    <source>
    </source>
</evidence>
<evidence type="ECO:0000269" key="2">
    <source>
    </source>
</evidence>
<evidence type="ECO:0000303" key="3">
    <source>
    </source>
</evidence>
<evidence type="ECO:0000305" key="4"/>
<evidence type="ECO:0007744" key="5">
    <source>
        <dbReference type="PDB" id="6VKZ"/>
    </source>
</evidence>
<evidence type="ECO:0007744" key="6">
    <source>
        <dbReference type="PDB" id="6VL0"/>
    </source>
</evidence>
<evidence type="ECO:0007829" key="7">
    <source>
        <dbReference type="PDB" id="6VKZ"/>
    </source>
</evidence>
<sequence length="482" mass="55647">MKFATSIVAAIATTGAAFTVIPQKLSHPSQLNALNTMGSISSITAESPKEVLSRVQDAGLTLTNPNDLYWMVDFLKEKYYDNGDYYYPIKTVCDGESIDVKFYCPFEPSLSPHYLELYGSRDERASIYETTMKKYNRINSEKTSAICTPYSSYGDTQIVAYFYSMMYYINDQTAHLKLPESEIESELIDILNDDILIYLNEFMSIFEPEDAQDLERIWDFLDFYQPYFSKVDGKIVLDEKYLVRTPSQMPLIKTICEYVSEQFAPSKNITQVIWEVVRYIKGVKDEIHIRGDKSFTLSLQEYDDFRDKVTASPMAHAVSDLTHERFSYEAYTNPAFMELENRCSEIITYFNDVCTSDRERLDEDPFNSVFILMDLDPSLNFAKSCDVVVEHAYNKMQAFLKLKEEILESASDEEERLALARMIKTREDSLIGYVLHEVCCVEDGYARDHKPLMKAFLEEEITKSLAEKVKFNPVESESVRLN</sequence>
<name>DABA_PSEMU</name>
<gene>
    <name evidence="3" type="primary">dabA</name>
</gene>
<accession>A0A386KZ50</accession>
<keyword id="KW-0002">3D-structure</keyword>
<keyword id="KW-0460">Magnesium</keyword>
<keyword id="KW-0479">Metal-binding</keyword>
<keyword id="KW-0808">Transferase</keyword>
<feature type="chain" id="PRO_0000454273" description="Magnesium-dependent glutamate N-prenyltransferase">
    <location>
        <begin position="1"/>
        <end position="482"/>
    </location>
</feature>
<feature type="binding site" evidence="2 5 6">
    <location>
        <position position="351"/>
    </location>
    <ligand>
        <name>Mg(2+)</name>
        <dbReference type="ChEBI" id="CHEBI:18420"/>
        <label>1</label>
    </ligand>
</feature>
<feature type="binding site" evidence="2 5 6">
    <location>
        <position position="355"/>
    </location>
    <ligand>
        <name>Mg(2+)</name>
        <dbReference type="ChEBI" id="CHEBI:18420"/>
        <label>1</label>
    </ligand>
</feature>
<feature type="binding site" evidence="2 5 6">
    <location>
        <position position="359"/>
    </location>
    <ligand>
        <name>Mg(2+)</name>
        <dbReference type="ChEBI" id="CHEBI:18420"/>
        <label>1</label>
    </ligand>
</feature>
<feature type="binding site" evidence="2 5 6">
    <location>
        <position position="359"/>
    </location>
    <ligand>
        <name>Mg(2+)</name>
        <dbReference type="ChEBI" id="CHEBI:18420"/>
        <label>2</label>
    </ligand>
</feature>
<feature type="binding site" evidence="2 5 6">
    <location>
        <position position="366"/>
    </location>
    <ligand>
        <name>Mg(2+)</name>
        <dbReference type="ChEBI" id="CHEBI:18420"/>
        <label>2</label>
    </ligand>
</feature>
<feature type="mutagenesis site" description="Acquired activity on dimethylallyl diphosphate (DMAPP), but reduced efficiency with geranyl diphosphate (GPP) as substrate." evidence="2">
    <original>T</original>
    <variation>M</variation>
    <location>
        <position position="143"/>
    </location>
</feature>
<feature type="mutagenesis site" description="Complete loss of activity." evidence="2">
    <original>Y</original>
    <variation>A</variation>
    <location>
        <position position="167"/>
    </location>
</feature>
<feature type="mutagenesis site" description="Normal activity." evidence="2">
    <original>Y</original>
    <variation>F</variation>
    <location>
        <position position="167"/>
    </location>
</feature>
<feature type="mutagenesis site" description="Strongly reduced activity." evidence="2">
    <original>Y</original>
    <variation>L</variation>
    <location>
        <position position="167"/>
    </location>
</feature>
<feature type="mutagenesis site" description="Complete loss of activity." evidence="2">
    <original>R</original>
    <variation>A</variation>
    <location>
        <position position="358"/>
    </location>
</feature>
<feature type="mutagenesis site" description="Complete loss of activity." evidence="2">
    <original>E</original>
    <variation>A</variation>
    <location>
        <position position="359"/>
    </location>
</feature>
<feature type="mutagenesis site" description="Reduced efficiency with L-glutamic acid (L-Glu) as substrate due to a reduced affinity." evidence="2">
    <original>H</original>
    <variation>A</variation>
    <location>
        <position position="436"/>
    </location>
</feature>
<feature type="mutagenesis site" description="Complete loss of activity." evidence="2">
    <original>E</original>
    <variation>A</variation>
    <location>
        <position position="437"/>
    </location>
</feature>
<feature type="mutagenesis site" description="Complete loss of activity." evidence="2">
    <original>R</original>
    <variation>A</variation>
    <location>
        <position position="447"/>
    </location>
</feature>
<feature type="helix" evidence="7">
    <location>
        <begin position="48"/>
        <end position="58"/>
    </location>
</feature>
<feature type="strand" evidence="7">
    <location>
        <begin position="62"/>
        <end position="64"/>
    </location>
</feature>
<feature type="helix" evidence="7">
    <location>
        <begin position="66"/>
        <end position="78"/>
    </location>
</feature>
<feature type="helix" evidence="7">
    <location>
        <begin position="80"/>
        <end position="82"/>
    </location>
</feature>
<feature type="strand" evidence="7">
    <location>
        <begin position="86"/>
        <end position="93"/>
    </location>
</feature>
<feature type="strand" evidence="7">
    <location>
        <begin position="96"/>
        <end position="103"/>
    </location>
</feature>
<feature type="helix" evidence="7">
    <location>
        <begin position="114"/>
        <end position="119"/>
    </location>
</feature>
<feature type="helix" evidence="7">
    <location>
        <begin position="121"/>
        <end position="125"/>
    </location>
</feature>
<feature type="strand" evidence="7">
    <location>
        <begin position="128"/>
        <end position="130"/>
    </location>
</feature>
<feature type="helix" evidence="7">
    <location>
        <begin position="132"/>
        <end position="138"/>
    </location>
</feature>
<feature type="helix" evidence="7">
    <location>
        <begin position="140"/>
        <end position="147"/>
    </location>
</feature>
<feature type="helix" evidence="7">
    <location>
        <begin position="153"/>
        <end position="173"/>
    </location>
</feature>
<feature type="helix" evidence="7">
    <location>
        <begin position="174"/>
        <end position="177"/>
    </location>
</feature>
<feature type="helix" evidence="7">
    <location>
        <begin position="180"/>
        <end position="182"/>
    </location>
</feature>
<feature type="helix" evidence="7">
    <location>
        <begin position="185"/>
        <end position="204"/>
    </location>
</feature>
<feature type="helix" evidence="7">
    <location>
        <begin position="211"/>
        <end position="220"/>
    </location>
</feature>
<feature type="helix" evidence="7">
    <location>
        <begin position="221"/>
        <end position="227"/>
    </location>
</feature>
<feature type="strand" evidence="7">
    <location>
        <begin position="228"/>
        <end position="231"/>
    </location>
</feature>
<feature type="strand" evidence="7">
    <location>
        <begin position="234"/>
        <end position="237"/>
    </location>
</feature>
<feature type="helix" evidence="7">
    <location>
        <begin position="239"/>
        <end position="241"/>
    </location>
</feature>
<feature type="helix" evidence="7">
    <location>
        <begin position="249"/>
        <end position="262"/>
    </location>
</feature>
<feature type="turn" evidence="7">
    <location>
        <begin position="263"/>
        <end position="266"/>
    </location>
</feature>
<feature type="helix" evidence="7">
    <location>
        <begin position="270"/>
        <end position="291"/>
    </location>
</feature>
<feature type="helix" evidence="7">
    <location>
        <begin position="299"/>
        <end position="309"/>
    </location>
</feature>
<feature type="helix" evidence="7">
    <location>
        <begin position="312"/>
        <end position="320"/>
    </location>
</feature>
<feature type="strand" evidence="7">
    <location>
        <begin position="323"/>
        <end position="325"/>
    </location>
</feature>
<feature type="helix" evidence="7">
    <location>
        <begin position="328"/>
        <end position="332"/>
    </location>
</feature>
<feature type="helix" evidence="7">
    <location>
        <begin position="334"/>
        <end position="354"/>
    </location>
</feature>
<feature type="helix" evidence="7">
    <location>
        <begin position="356"/>
        <end position="362"/>
    </location>
</feature>
<feature type="helix" evidence="7">
    <location>
        <begin position="368"/>
        <end position="375"/>
    </location>
</feature>
<feature type="helix" evidence="7">
    <location>
        <begin position="381"/>
        <end position="408"/>
    </location>
</feature>
<feature type="helix" evidence="7">
    <location>
        <begin position="413"/>
        <end position="438"/>
    </location>
</feature>
<feature type="strand" evidence="7">
    <location>
        <begin position="445"/>
        <end position="448"/>
    </location>
</feature>
<feature type="helix" evidence="7">
    <location>
        <begin position="451"/>
        <end position="471"/>
    </location>
</feature>
<protein>
    <recommendedName>
        <fullName evidence="3">Magnesium-dependent glutamate N-prenyltransferase</fullName>
        <ecNumber evidence="1 2">2.5.1.-</ecNumber>
    </recommendedName>
    <alternativeName>
        <fullName evidence="3">Domoic acid biosynthesis cluster protein A</fullName>
        <shortName evidence="3">PmDabA</shortName>
    </alternativeName>
</protein>
<reference key="1">
    <citation type="journal article" date="2018" name="Science">
        <title>Biosynthesis of the neurotoxin domoic acid in a bloom-forming diatom.</title>
        <authorList>
            <person name="Brunson J.K."/>
            <person name="McKinnie S.M.K."/>
            <person name="Chekan J.R."/>
            <person name="McCrow J.P."/>
            <person name="Miles Z.D."/>
            <person name="Bertrand E.M."/>
            <person name="Bielinski V.A."/>
            <person name="Luhavaya H."/>
            <person name="Obornik M."/>
            <person name="Smith G.J."/>
            <person name="Hutchins D.A."/>
            <person name="Allen A.E."/>
            <person name="Moore B.S."/>
        </authorList>
    </citation>
    <scope>NUCLEOTIDE SEQUENCE [GENOMIC DNA]</scope>
    <scope>FUNCTION</scope>
    <scope>CATALYTIC ACTIVITY</scope>
    <scope>PATHWAY</scope>
    <scope>INDUCTION BY PHOSPHATE LIMITATION AND CO(2)</scope>
    <source>
        <strain>15091C3</strain>
    </source>
</reference>
<reference key="2">
    <citation type="journal article" date="1998" name="Nat. Toxins">
        <title>The activation of glutamate receptors by kainic acid and domoic acid.</title>
        <authorList>
            <person name="Hampson D.R."/>
            <person name="Manalo J.L."/>
        </authorList>
    </citation>
    <scope>REVIEW ON NEUROTOXIC ACTIVITY</scope>
</reference>
<reference key="3">
    <citation type="journal article" date="2020" name="Proc. Natl. Acad. Sci. U.S.A.">
        <title>Algal neurotoxin biosynthesis repurposes the terpene cyclase structural fold into an N-prenyltransferase.</title>
        <authorList>
            <person name="Chekan J.R."/>
            <person name="McKinnie S.M.K."/>
            <person name="Noel J.P."/>
            <person name="Moore B.S."/>
        </authorList>
    </citation>
    <scope>X-RAY CRYSTALLOGRAPHY (2.10 ANGSTROMS) OF 46-482 IN COMPLEX WITH MAGNESIUM AND MANGANESE</scope>
    <scope>FUNCTION</scope>
    <scope>BIOPHYSICOCHEMICAL PROPERTIES</scope>
    <scope>MUTAGENESIS OF THR-143; TYR-167; ARG-358; GLU-359; HIS-436; GLU-437 AND ARG-447</scope>
    <scope>COFACTOR</scope>
    <scope>CATALYTIC ACTIVITY</scope>
</reference>
<dbReference type="EC" id="2.5.1.-" evidence="1 2"/>
<dbReference type="EMBL" id="MH202990">
    <property type="protein sequence ID" value="AYD91073.1"/>
    <property type="molecule type" value="Genomic_DNA"/>
</dbReference>
<dbReference type="PDB" id="6VKZ">
    <property type="method" value="X-ray"/>
    <property type="resolution" value="2.10 A"/>
    <property type="chains" value="A=46-482"/>
</dbReference>
<dbReference type="PDB" id="6VL0">
    <property type="method" value="X-ray"/>
    <property type="resolution" value="2.20 A"/>
    <property type="chains" value="A=46-482"/>
</dbReference>
<dbReference type="PDB" id="6VL1">
    <property type="method" value="X-ray"/>
    <property type="resolution" value="2.10 A"/>
    <property type="chains" value="A=46-482"/>
</dbReference>
<dbReference type="PDBsum" id="6VKZ"/>
<dbReference type="PDBsum" id="6VL0"/>
<dbReference type="PDBsum" id="6VL1"/>
<dbReference type="SMR" id="A0A386KZ50"/>
<dbReference type="GO" id="GO:0046872">
    <property type="term" value="F:metal ion binding"/>
    <property type="evidence" value="ECO:0007669"/>
    <property type="project" value="UniProtKB-KW"/>
</dbReference>
<dbReference type="GO" id="GO:0016740">
    <property type="term" value="F:transferase activity"/>
    <property type="evidence" value="ECO:0007669"/>
    <property type="project" value="UniProtKB-KW"/>
</dbReference>
<dbReference type="GO" id="GO:0071244">
    <property type="term" value="P:cellular response to carbon dioxide"/>
    <property type="evidence" value="ECO:0000270"/>
    <property type="project" value="UniProtKB"/>
</dbReference>
<dbReference type="GO" id="GO:0016036">
    <property type="term" value="P:cellular response to phosphate starvation"/>
    <property type="evidence" value="ECO:0000270"/>
    <property type="project" value="UniProtKB"/>
</dbReference>
<dbReference type="Gene3D" id="1.10.600.10">
    <property type="entry name" value="Farnesyl Diphosphate Synthase"/>
    <property type="match status" value="1"/>
</dbReference>
<dbReference type="InterPro" id="IPR008949">
    <property type="entry name" value="Isoprenoid_synthase_dom_sf"/>
</dbReference>
<dbReference type="Pfam" id="PF19086">
    <property type="entry name" value="Terpene_syn_C_2"/>
    <property type="match status" value="1"/>
</dbReference>
<dbReference type="SUPFAM" id="SSF48576">
    <property type="entry name" value="Terpenoid synthases"/>
    <property type="match status" value="1"/>
</dbReference>
<proteinExistence type="evidence at protein level"/>
<comment type="function">
    <text evidence="1 2">Magnesium-dependent glutamate N-prenyltransferase: part of the gene cluster that mediates the biosynthesis of domoic acid (DA) and derivatives, natural products with neurochemical activity acting as ionotropic glutamate receptor (iGluR) agonists, thus being neurotoxins causing amnesic shellfish poisoning (ASP) (PubMed:30262498). Catalyzes the conversion of L-glutamic acid (L-Glu) to N-geranyl-L-glutamic acid (NGG) in the presence of geranyl diphosphate (GPP) (PubMed:30262498, PubMed:32457155). Also able to catalyze the formation of farnesyl-L-glutamate from farnesyl diphosphate (FPP) (PubMed:32457155). Cannot use dimethylallyl diphosphate (DMAPP) as substrate (PubMed:32457155).</text>
</comment>
<comment type="catalytic activity">
    <reaction evidence="1 2">
        <text>(2E)-geranyl diphosphate + L-glutamate = N-geranyl-L-glutamate + diphosphate</text>
        <dbReference type="Rhea" id="RHEA:68156"/>
        <dbReference type="ChEBI" id="CHEBI:29985"/>
        <dbReference type="ChEBI" id="CHEBI:33019"/>
        <dbReference type="ChEBI" id="CHEBI:58057"/>
        <dbReference type="ChEBI" id="CHEBI:172365"/>
    </reaction>
    <physiologicalReaction direction="left-to-right" evidence="1 2">
        <dbReference type="Rhea" id="RHEA:68157"/>
    </physiologicalReaction>
</comment>
<comment type="cofactor">
    <cofactor evidence="2">
        <name>Mg(2+)</name>
        <dbReference type="ChEBI" id="CHEBI:18420"/>
    </cofactor>
    <text evidence="2">Can also use Mn(2+) ions as cofactors with a lower efficiency.</text>
</comment>
<comment type="biophysicochemical properties">
    <kinetics>
        <KM evidence="2">0.33 uM for geranyl diphosphate</KM>
        <KM evidence="2">21 mM for L-glutamic acid</KM>
        <text evidence="2">kcat is 4.3 min(-1) with geranyl diphosphate as substrate (PubMed:32457155). kcat is 4.8 min(-1) with L-glutamic acid as substrate (PubMed:32457155).</text>
    </kinetics>
</comment>
<comment type="pathway">
    <text evidence="1">Secondary metabolite biosynthesis.</text>
</comment>
<comment type="induction">
    <text evidence="1">Up-regulated under phosphate limitation and by increasing partial pressure of CO(2).</text>
</comment>
<comment type="similarity">
    <text evidence="4">Belongs to the terpene synthase family.</text>
</comment>